<proteinExistence type="evidence at protein level"/>
<comment type="function">
    <text>Required for assembly of the mitotic spindle.</text>
</comment>
<comment type="subunit">
    <text>Might be dimeric.</text>
</comment>
<comment type="interaction">
    <interactant intactId="EBI-9749">
        <id>P28743</id>
    </interactant>
    <interactant intactId="EBI-12041">
        <id>P33419</id>
        <label>SPC29</label>
    </interactant>
    <organismsDiffer>false</organismsDiffer>
    <experiments>4</experiments>
</comment>
<comment type="subcellular location">
    <subcellularLocation>
        <location evidence="5">Cytoplasm</location>
        <location evidence="5">Cytoskeleton</location>
    </subcellularLocation>
</comment>
<comment type="miscellaneous">
    <text evidence="4">Present with 656 molecules/cell in log phase SD medium.</text>
</comment>
<comment type="similarity">
    <text evidence="2">Belongs to the TRAFAC class myosin-kinesin ATPase superfamily. Kinesin family.</text>
</comment>
<accession>P28743</accession>
<accession>D6W3L3</accession>
<dbReference type="EMBL" id="Z11963">
    <property type="protein sequence ID" value="CAA78021.1"/>
    <property type="molecule type" value="Genomic_DNA"/>
</dbReference>
<dbReference type="EMBL" id="X96770">
    <property type="protein sequence ID" value="CAA65566.1"/>
    <property type="molecule type" value="Genomic_DNA"/>
</dbReference>
<dbReference type="EMBL" id="Z73511">
    <property type="protein sequence ID" value="CAA97860.1"/>
    <property type="molecule type" value="Genomic_DNA"/>
</dbReference>
<dbReference type="EMBL" id="BK006949">
    <property type="protein sequence ID" value="DAA11279.1"/>
    <property type="molecule type" value="Genomic_DNA"/>
</dbReference>
<dbReference type="PIR" id="C42640">
    <property type="entry name" value="C42640"/>
</dbReference>
<dbReference type="RefSeq" id="NP_015170.1">
    <property type="nucleotide sequence ID" value="NM_001183969.1"/>
</dbReference>
<dbReference type="SMR" id="P28743"/>
<dbReference type="BioGRID" id="36028">
    <property type="interactions" value="121"/>
</dbReference>
<dbReference type="DIP" id="DIP-3012N"/>
<dbReference type="FunCoup" id="P28743">
    <property type="interactions" value="93"/>
</dbReference>
<dbReference type="IntAct" id="P28743">
    <property type="interactions" value="8"/>
</dbReference>
<dbReference type="MINT" id="P28743"/>
<dbReference type="STRING" id="4932.YPL155C"/>
<dbReference type="GlyGen" id="P28743">
    <property type="glycosylation" value="2 sites, 1 O-linked glycan (2 sites)"/>
</dbReference>
<dbReference type="iPTMnet" id="P28743"/>
<dbReference type="PaxDb" id="4932-YPL155C"/>
<dbReference type="PeptideAtlas" id="P28743"/>
<dbReference type="EnsemblFungi" id="YPL155C_mRNA">
    <property type="protein sequence ID" value="YPL155C"/>
    <property type="gene ID" value="YPL155C"/>
</dbReference>
<dbReference type="GeneID" id="855948"/>
<dbReference type="KEGG" id="sce:YPL155C"/>
<dbReference type="AGR" id="SGD:S000006076"/>
<dbReference type="SGD" id="S000006076">
    <property type="gene designation" value="KIP2"/>
</dbReference>
<dbReference type="VEuPathDB" id="FungiDB:YPL155C"/>
<dbReference type="eggNOG" id="KOG0242">
    <property type="taxonomic scope" value="Eukaryota"/>
</dbReference>
<dbReference type="GeneTree" id="ENSGT00940000160597"/>
<dbReference type="HOGENOM" id="CLU_001485_24_1_1"/>
<dbReference type="InParanoid" id="P28743"/>
<dbReference type="OMA" id="LCTIHMG"/>
<dbReference type="OrthoDB" id="3176171at2759"/>
<dbReference type="BioCyc" id="YEAST:G3O-34051-MONOMER"/>
<dbReference type="BioGRID-ORCS" id="855948">
    <property type="hits" value="4 hits in 10 CRISPR screens"/>
</dbReference>
<dbReference type="PRO" id="PR:P28743"/>
<dbReference type="Proteomes" id="UP000002311">
    <property type="component" value="Chromosome XVI"/>
</dbReference>
<dbReference type="RNAct" id="P28743">
    <property type="molecule type" value="protein"/>
</dbReference>
<dbReference type="GO" id="GO:1903754">
    <property type="term" value="C:cortical microtubule plus-end"/>
    <property type="evidence" value="ECO:0000314"/>
    <property type="project" value="SGD"/>
</dbReference>
<dbReference type="GO" id="GO:0005737">
    <property type="term" value="C:cytoplasm"/>
    <property type="evidence" value="ECO:0000318"/>
    <property type="project" value="GO_Central"/>
</dbReference>
<dbReference type="GO" id="GO:0005881">
    <property type="term" value="C:cytoplasmic microtubule"/>
    <property type="evidence" value="ECO:0000314"/>
    <property type="project" value="SGD"/>
</dbReference>
<dbReference type="GO" id="GO:0005871">
    <property type="term" value="C:kinesin complex"/>
    <property type="evidence" value="ECO:0000318"/>
    <property type="project" value="GO_Central"/>
</dbReference>
<dbReference type="GO" id="GO:0005874">
    <property type="term" value="C:microtubule"/>
    <property type="evidence" value="ECO:0000318"/>
    <property type="project" value="GO_Central"/>
</dbReference>
<dbReference type="GO" id="GO:0005739">
    <property type="term" value="C:mitochondrion"/>
    <property type="evidence" value="ECO:0007005"/>
    <property type="project" value="SGD"/>
</dbReference>
<dbReference type="GO" id="GO:0005816">
    <property type="term" value="C:spindle pole body"/>
    <property type="evidence" value="ECO:0000314"/>
    <property type="project" value="SGD"/>
</dbReference>
<dbReference type="GO" id="GO:0005524">
    <property type="term" value="F:ATP binding"/>
    <property type="evidence" value="ECO:0007669"/>
    <property type="project" value="UniProtKB-KW"/>
</dbReference>
<dbReference type="GO" id="GO:0016887">
    <property type="term" value="F:ATP hydrolysis activity"/>
    <property type="evidence" value="ECO:0000318"/>
    <property type="project" value="GO_Central"/>
</dbReference>
<dbReference type="GO" id="GO:0008017">
    <property type="term" value="F:microtubule binding"/>
    <property type="evidence" value="ECO:0000318"/>
    <property type="project" value="GO_Central"/>
</dbReference>
<dbReference type="GO" id="GO:0003777">
    <property type="term" value="F:microtubule motor activity"/>
    <property type="evidence" value="ECO:0000318"/>
    <property type="project" value="GO_Central"/>
</dbReference>
<dbReference type="GO" id="GO:0061863">
    <property type="term" value="F:microtubule plus end polymerase"/>
    <property type="evidence" value="ECO:0000314"/>
    <property type="project" value="SGD"/>
</dbReference>
<dbReference type="GO" id="GO:0008574">
    <property type="term" value="F:plus-end-directed microtubule motor activity"/>
    <property type="evidence" value="ECO:0000315"/>
    <property type="project" value="SGD"/>
</dbReference>
<dbReference type="GO" id="GO:0015631">
    <property type="term" value="F:tubulin binding"/>
    <property type="evidence" value="ECO:0000314"/>
    <property type="project" value="SGD"/>
</dbReference>
<dbReference type="GO" id="GO:0051301">
    <property type="term" value="P:cell division"/>
    <property type="evidence" value="ECO:0007669"/>
    <property type="project" value="UniProtKB-KW"/>
</dbReference>
<dbReference type="GO" id="GO:0046785">
    <property type="term" value="P:microtubule polymerization"/>
    <property type="evidence" value="ECO:0000314"/>
    <property type="project" value="SGD"/>
</dbReference>
<dbReference type="GO" id="GO:0007018">
    <property type="term" value="P:microtubule-based movement"/>
    <property type="evidence" value="ECO:0000314"/>
    <property type="project" value="SGD"/>
</dbReference>
<dbReference type="GO" id="GO:0007026">
    <property type="term" value="P:negative regulation of microtubule depolymerization"/>
    <property type="evidence" value="ECO:0000314"/>
    <property type="project" value="SGD"/>
</dbReference>
<dbReference type="GO" id="GO:0030473">
    <property type="term" value="P:nuclear migration along microtubule"/>
    <property type="evidence" value="ECO:0000315"/>
    <property type="project" value="SGD"/>
</dbReference>
<dbReference type="CDD" id="cd01374">
    <property type="entry name" value="KISc_CENP_E"/>
    <property type="match status" value="1"/>
</dbReference>
<dbReference type="FunFam" id="3.40.850.10:FF:000073">
    <property type="entry name" value="Kinesin-like protein"/>
    <property type="match status" value="1"/>
</dbReference>
<dbReference type="Gene3D" id="3.40.850.10">
    <property type="entry name" value="Kinesin motor domain"/>
    <property type="match status" value="1"/>
</dbReference>
<dbReference type="InterPro" id="IPR027640">
    <property type="entry name" value="Kinesin-like_fam"/>
</dbReference>
<dbReference type="InterPro" id="IPR019821">
    <property type="entry name" value="Kinesin_motor_CS"/>
</dbReference>
<dbReference type="InterPro" id="IPR001752">
    <property type="entry name" value="Kinesin_motor_dom"/>
</dbReference>
<dbReference type="InterPro" id="IPR036961">
    <property type="entry name" value="Kinesin_motor_dom_sf"/>
</dbReference>
<dbReference type="InterPro" id="IPR027417">
    <property type="entry name" value="P-loop_NTPase"/>
</dbReference>
<dbReference type="PANTHER" id="PTHR47968">
    <property type="entry name" value="CENTROMERE PROTEIN E"/>
    <property type="match status" value="1"/>
</dbReference>
<dbReference type="PANTHER" id="PTHR47968:SF36">
    <property type="entry name" value="KINESIN HEAVY CHAIN ISOFORM X1"/>
    <property type="match status" value="1"/>
</dbReference>
<dbReference type="Pfam" id="PF00225">
    <property type="entry name" value="Kinesin"/>
    <property type="match status" value="1"/>
</dbReference>
<dbReference type="PRINTS" id="PR00380">
    <property type="entry name" value="KINESINHEAVY"/>
</dbReference>
<dbReference type="SMART" id="SM00129">
    <property type="entry name" value="KISc"/>
    <property type="match status" value="1"/>
</dbReference>
<dbReference type="SUPFAM" id="SSF52540">
    <property type="entry name" value="P-loop containing nucleoside triphosphate hydrolases"/>
    <property type="match status" value="1"/>
</dbReference>
<dbReference type="PROSITE" id="PS00411">
    <property type="entry name" value="KINESIN_MOTOR_1"/>
    <property type="match status" value="1"/>
</dbReference>
<dbReference type="PROSITE" id="PS50067">
    <property type="entry name" value="KINESIN_MOTOR_2"/>
    <property type="match status" value="1"/>
</dbReference>
<sequence>MIQKMSPSLRRPSTRSSSGSSNIPQSPSVRSTSSFSNLTRNSIRSTSNSGSQSISASSTRSNSPLRSVSAKSDPFLHPGRIRIRRSDSINNNSRKNDTYTGSITVTIRPKPRSVGTSRDHVGLKSPRYSQPRSNSHHGSNTFVRDPWFITNDKTIVHEEIGEFKFDHVFASHCTNLEVYERTSKPMIDKLLMGFNATIFAYGMTGSGKTFTMSGNEQELGLIPLSVSYLFTNIMEQSMNGDKKFDVIISYLEIYNERIYDLLESGLEESGSRISTPSRLYMSKSNSNGLGVELKIRDDSQYGVKVIGLTERRCESSEELLRWIAVGDKSRKIGETDYNARSSRSHAIVLIRLTSTNVKNGTSRSSTLSLCDLAGSERATGQQERRKEGSFINKSLLALGTVISKLSADKMNSVGSNIPSPSASGSSSSSGNATNNGTSPSNHIPYRDSKLTRLLQPALSGDSIVTTICTVDTRNDAAAETMNTLRFASRAKNVALHVSKKSIISNGNNDGDKDRTIELLRRQLEEQRRMISELKNRSNIGEPLTKSSNESTYKDIKATGNDGDPNLALMRAENRVLKYKLENCEKLLDKDVVDLQDSEIMEIVEMLPFEVGTLLETKFQGLESQIRQYRKYTQKLEDKIMALEKSGHTAMSLTGCDGTEVIELQKMLERKDKMIEALQSAKRLRDRALKPLINTQQSPHPVVDNDK</sequence>
<name>KIP2_YEAST</name>
<reference key="1">
    <citation type="journal article" date="1992" name="J. Cell Biol.">
        <title>Kinesin-related proteins required for assembly of the mitotic spindle.</title>
        <authorList>
            <person name="Roof D.M."/>
            <person name="Meluh P.B."/>
            <person name="Rose M.D."/>
        </authorList>
    </citation>
    <scope>NUCLEOTIDE SEQUENCE [GENOMIC DNA]</scope>
    <source>
        <strain>ATCC 204508 / S288c</strain>
    </source>
</reference>
<reference key="2">
    <citation type="journal article" date="1996" name="Yeast">
        <title>The sequence of 55 kb on the left arm of yeast chromosome XVI identifies a small nuclear RNA, a new putative protein kinase and two new putative regulators.</title>
        <authorList>
            <person name="Purnelle B."/>
            <person name="Coster F."/>
            <person name="Goffeau A."/>
        </authorList>
    </citation>
    <scope>NUCLEOTIDE SEQUENCE [GENOMIC DNA]</scope>
    <source>
        <strain>ATCC 204511 / S288c / AB972</strain>
    </source>
</reference>
<reference key="3">
    <citation type="journal article" date="1997" name="Nature">
        <title>The nucleotide sequence of Saccharomyces cerevisiae chromosome XVI.</title>
        <authorList>
            <person name="Bussey H."/>
            <person name="Storms R.K."/>
            <person name="Ahmed A."/>
            <person name="Albermann K."/>
            <person name="Allen E."/>
            <person name="Ansorge W."/>
            <person name="Araujo R."/>
            <person name="Aparicio A."/>
            <person name="Barrell B.G."/>
            <person name="Badcock K."/>
            <person name="Benes V."/>
            <person name="Botstein D."/>
            <person name="Bowman S."/>
            <person name="Brueckner M."/>
            <person name="Carpenter J."/>
            <person name="Cherry J.M."/>
            <person name="Chung E."/>
            <person name="Churcher C.M."/>
            <person name="Coster F."/>
            <person name="Davis K."/>
            <person name="Davis R.W."/>
            <person name="Dietrich F.S."/>
            <person name="Delius H."/>
            <person name="DiPaolo T."/>
            <person name="Dubois E."/>
            <person name="Duesterhoeft A."/>
            <person name="Duncan M."/>
            <person name="Floeth M."/>
            <person name="Fortin N."/>
            <person name="Friesen J.D."/>
            <person name="Fritz C."/>
            <person name="Goffeau A."/>
            <person name="Hall J."/>
            <person name="Hebling U."/>
            <person name="Heumann K."/>
            <person name="Hilbert H."/>
            <person name="Hillier L.W."/>
            <person name="Hunicke-Smith S."/>
            <person name="Hyman R.W."/>
            <person name="Johnston M."/>
            <person name="Kalman S."/>
            <person name="Kleine K."/>
            <person name="Komp C."/>
            <person name="Kurdi O."/>
            <person name="Lashkari D."/>
            <person name="Lew H."/>
            <person name="Lin A."/>
            <person name="Lin D."/>
            <person name="Louis E.J."/>
            <person name="Marathe R."/>
            <person name="Messenguy F."/>
            <person name="Mewes H.-W."/>
            <person name="Mirtipati S."/>
            <person name="Moestl D."/>
            <person name="Mueller-Auer S."/>
            <person name="Namath A."/>
            <person name="Nentwich U."/>
            <person name="Oefner P."/>
            <person name="Pearson D."/>
            <person name="Petel F.X."/>
            <person name="Pohl T.M."/>
            <person name="Purnelle B."/>
            <person name="Rajandream M.A."/>
            <person name="Rechmann S."/>
            <person name="Rieger M."/>
            <person name="Riles L."/>
            <person name="Roberts D."/>
            <person name="Schaefer M."/>
            <person name="Scharfe M."/>
            <person name="Scherens B."/>
            <person name="Schramm S."/>
            <person name="Schroeder M."/>
            <person name="Sdicu A.-M."/>
            <person name="Tettelin H."/>
            <person name="Urrestarazu L.A."/>
            <person name="Ushinsky S."/>
            <person name="Vierendeels F."/>
            <person name="Vissers S."/>
            <person name="Voss H."/>
            <person name="Walsh S.V."/>
            <person name="Wambutt R."/>
            <person name="Wang Y."/>
            <person name="Wedler E."/>
            <person name="Wedler H."/>
            <person name="Winnett E."/>
            <person name="Zhong W.-W."/>
            <person name="Zollner A."/>
            <person name="Vo D.H."/>
            <person name="Hani J."/>
        </authorList>
    </citation>
    <scope>NUCLEOTIDE SEQUENCE [LARGE SCALE GENOMIC DNA]</scope>
    <source>
        <strain>ATCC 204508 / S288c</strain>
    </source>
</reference>
<reference key="4">
    <citation type="journal article" date="2014" name="G3 (Bethesda)">
        <title>The reference genome sequence of Saccharomyces cerevisiae: Then and now.</title>
        <authorList>
            <person name="Engel S.R."/>
            <person name="Dietrich F.S."/>
            <person name="Fisk D.G."/>
            <person name="Binkley G."/>
            <person name="Balakrishnan R."/>
            <person name="Costanzo M.C."/>
            <person name="Dwight S.S."/>
            <person name="Hitz B.C."/>
            <person name="Karra K."/>
            <person name="Nash R.S."/>
            <person name="Weng S."/>
            <person name="Wong E.D."/>
            <person name="Lloyd P."/>
            <person name="Skrzypek M.S."/>
            <person name="Miyasato S.R."/>
            <person name="Simison M."/>
            <person name="Cherry J.M."/>
        </authorList>
    </citation>
    <scope>GENOME REANNOTATION</scope>
    <source>
        <strain>ATCC 204508 / S288c</strain>
    </source>
</reference>
<reference key="5">
    <citation type="journal article" date="2003" name="Nature">
        <title>Global analysis of protein expression in yeast.</title>
        <authorList>
            <person name="Ghaemmaghami S."/>
            <person name="Huh W.-K."/>
            <person name="Bower K."/>
            <person name="Howson R.W."/>
            <person name="Belle A."/>
            <person name="Dephoure N."/>
            <person name="O'Shea E.K."/>
            <person name="Weissman J.S."/>
        </authorList>
    </citation>
    <scope>LEVEL OF PROTEIN EXPRESSION [LARGE SCALE ANALYSIS]</scope>
</reference>
<reference key="6">
    <citation type="journal article" date="2008" name="Mol. Cell. Proteomics">
        <title>A multidimensional chromatography technology for in-depth phosphoproteome analysis.</title>
        <authorList>
            <person name="Albuquerque C.P."/>
            <person name="Smolka M.B."/>
            <person name="Payne S.H."/>
            <person name="Bafna V."/>
            <person name="Eng J."/>
            <person name="Zhou H."/>
        </authorList>
    </citation>
    <scope>IDENTIFICATION BY MASS SPECTROMETRY [LARGE SCALE ANALYSIS]</scope>
</reference>
<organism>
    <name type="scientific">Saccharomyces cerevisiae (strain ATCC 204508 / S288c)</name>
    <name type="common">Baker's yeast</name>
    <dbReference type="NCBI Taxonomy" id="559292"/>
    <lineage>
        <taxon>Eukaryota</taxon>
        <taxon>Fungi</taxon>
        <taxon>Dikarya</taxon>
        <taxon>Ascomycota</taxon>
        <taxon>Saccharomycotina</taxon>
        <taxon>Saccharomycetes</taxon>
        <taxon>Saccharomycetales</taxon>
        <taxon>Saccharomycetaceae</taxon>
        <taxon>Saccharomyces</taxon>
    </lineage>
</organism>
<evidence type="ECO:0000255" key="1"/>
<evidence type="ECO:0000255" key="2">
    <source>
        <dbReference type="PROSITE-ProRule" id="PRU00283"/>
    </source>
</evidence>
<evidence type="ECO:0000256" key="3">
    <source>
        <dbReference type="SAM" id="MobiDB-lite"/>
    </source>
</evidence>
<evidence type="ECO:0000269" key="4">
    <source>
    </source>
</evidence>
<evidence type="ECO:0000305" key="5"/>
<keyword id="KW-0067">ATP-binding</keyword>
<keyword id="KW-0131">Cell cycle</keyword>
<keyword id="KW-0132">Cell division</keyword>
<keyword id="KW-0175">Coiled coil</keyword>
<keyword id="KW-0963">Cytoplasm</keyword>
<keyword id="KW-0206">Cytoskeleton</keyword>
<keyword id="KW-0493">Microtubule</keyword>
<keyword id="KW-0498">Mitosis</keyword>
<keyword id="KW-0505">Motor protein</keyword>
<keyword id="KW-0547">Nucleotide-binding</keyword>
<keyword id="KW-1185">Reference proteome</keyword>
<feature type="chain" id="PRO_0000125453" description="Kinesin-like protein KIP2">
    <location>
        <begin position="1"/>
        <end position="706"/>
    </location>
</feature>
<feature type="domain" description="Kinesin motor" evidence="2">
    <location>
        <begin position="102"/>
        <end position="493"/>
    </location>
</feature>
<feature type="region of interest" description="Disordered" evidence="3">
    <location>
        <begin position="1"/>
        <end position="139"/>
    </location>
</feature>
<feature type="region of interest" description="Disordered" evidence="3">
    <location>
        <begin position="413"/>
        <end position="445"/>
    </location>
</feature>
<feature type="coiled-coil region" evidence="1">
    <location>
        <begin position="507"/>
        <end position="541"/>
    </location>
</feature>
<feature type="coiled-coil region" evidence="1">
    <location>
        <begin position="569"/>
        <end position="589"/>
    </location>
</feature>
<feature type="coiled-coil region" evidence="1">
    <location>
        <begin position="612"/>
        <end position="689"/>
    </location>
</feature>
<feature type="compositionally biased region" description="Low complexity" evidence="3">
    <location>
        <begin position="1"/>
        <end position="28"/>
    </location>
</feature>
<feature type="compositionally biased region" description="Low complexity" evidence="3">
    <location>
        <begin position="36"/>
        <end position="63"/>
    </location>
</feature>
<feature type="compositionally biased region" description="Polar residues" evidence="3">
    <location>
        <begin position="127"/>
        <end position="139"/>
    </location>
</feature>
<feature type="compositionally biased region" description="Low complexity" evidence="3">
    <location>
        <begin position="414"/>
        <end position="441"/>
    </location>
</feature>
<feature type="binding site" evidence="2">
    <location>
        <begin position="202"/>
        <end position="209"/>
    </location>
    <ligand>
        <name>ATP</name>
        <dbReference type="ChEBI" id="CHEBI:30616"/>
    </ligand>
</feature>
<protein>
    <recommendedName>
        <fullName>Kinesin-like protein KIP2</fullName>
    </recommendedName>
</protein>
<gene>
    <name type="primary">KIP2</name>
    <name type="ordered locus">YPL155C</name>
    <name type="ORF">P2581</name>
</gene>